<protein>
    <recommendedName>
        <fullName evidence="1">Small ribosomal subunit protein uS4</fullName>
    </recommendedName>
    <alternativeName>
        <fullName evidence="3">30S ribosomal protein S4</fullName>
    </alternativeName>
</protein>
<name>RS4_CHLFF</name>
<accession>Q252M1</accession>
<reference key="1">
    <citation type="journal article" date="2006" name="DNA Res.">
        <title>Genome sequence of the cat pathogen, Chlamydophila felis.</title>
        <authorList>
            <person name="Azuma Y."/>
            <person name="Hirakawa H."/>
            <person name="Yamashita A."/>
            <person name="Cai Y."/>
            <person name="Rahman M.A."/>
            <person name="Suzuki H."/>
            <person name="Mitaku S."/>
            <person name="Toh H."/>
            <person name="Goto S."/>
            <person name="Murakami T."/>
            <person name="Sugi K."/>
            <person name="Hayashi H."/>
            <person name="Fukushi H."/>
            <person name="Hattori M."/>
            <person name="Kuhara S."/>
            <person name="Shirai M."/>
        </authorList>
    </citation>
    <scope>NUCLEOTIDE SEQUENCE [LARGE SCALE GENOMIC DNA]</scope>
    <source>
        <strain>Fe/C-56</strain>
    </source>
</reference>
<keyword id="KW-0687">Ribonucleoprotein</keyword>
<keyword id="KW-0689">Ribosomal protein</keyword>
<keyword id="KW-0694">RNA-binding</keyword>
<keyword id="KW-0699">rRNA-binding</keyword>
<proteinExistence type="inferred from homology"/>
<gene>
    <name evidence="1" type="primary">rpsD</name>
    <name type="ordered locus">CF0995</name>
</gene>
<comment type="function">
    <text evidence="1">One of the primary rRNA binding proteins, it binds directly to 16S rRNA where it nucleates assembly of the body of the 30S subunit.</text>
</comment>
<comment type="function">
    <text evidence="1">With S5 and S12 plays an important role in translational accuracy.</text>
</comment>
<comment type="subunit">
    <text evidence="1">Part of the 30S ribosomal subunit. Contacts protein S5. The interaction surface between S4 and S5 is involved in control of translational fidelity.</text>
</comment>
<comment type="similarity">
    <text evidence="1">Belongs to the universal ribosomal protein uS4 family.</text>
</comment>
<evidence type="ECO:0000255" key="1">
    <source>
        <dbReference type="HAMAP-Rule" id="MF_01306"/>
    </source>
</evidence>
<evidence type="ECO:0000256" key="2">
    <source>
        <dbReference type="SAM" id="MobiDB-lite"/>
    </source>
</evidence>
<evidence type="ECO:0000305" key="3"/>
<dbReference type="EMBL" id="AP006861">
    <property type="protein sequence ID" value="BAE81767.1"/>
    <property type="molecule type" value="Genomic_DNA"/>
</dbReference>
<dbReference type="RefSeq" id="WP_011458540.1">
    <property type="nucleotide sequence ID" value="NC_007899.1"/>
</dbReference>
<dbReference type="SMR" id="Q252M1"/>
<dbReference type="STRING" id="264202.CF0995"/>
<dbReference type="KEGG" id="cfe:CF0995"/>
<dbReference type="eggNOG" id="COG0522">
    <property type="taxonomic scope" value="Bacteria"/>
</dbReference>
<dbReference type="HOGENOM" id="CLU_092403_0_1_0"/>
<dbReference type="OrthoDB" id="9803672at2"/>
<dbReference type="Proteomes" id="UP000001260">
    <property type="component" value="Chromosome"/>
</dbReference>
<dbReference type="GO" id="GO:0015935">
    <property type="term" value="C:small ribosomal subunit"/>
    <property type="evidence" value="ECO:0007669"/>
    <property type="project" value="InterPro"/>
</dbReference>
<dbReference type="GO" id="GO:0019843">
    <property type="term" value="F:rRNA binding"/>
    <property type="evidence" value="ECO:0007669"/>
    <property type="project" value="UniProtKB-UniRule"/>
</dbReference>
<dbReference type="GO" id="GO:0003735">
    <property type="term" value="F:structural constituent of ribosome"/>
    <property type="evidence" value="ECO:0007669"/>
    <property type="project" value="InterPro"/>
</dbReference>
<dbReference type="GO" id="GO:0042274">
    <property type="term" value="P:ribosomal small subunit biogenesis"/>
    <property type="evidence" value="ECO:0007669"/>
    <property type="project" value="TreeGrafter"/>
</dbReference>
<dbReference type="GO" id="GO:0006412">
    <property type="term" value="P:translation"/>
    <property type="evidence" value="ECO:0007669"/>
    <property type="project" value="UniProtKB-UniRule"/>
</dbReference>
<dbReference type="CDD" id="cd00165">
    <property type="entry name" value="S4"/>
    <property type="match status" value="1"/>
</dbReference>
<dbReference type="FunFam" id="3.10.290.10:FF:000001">
    <property type="entry name" value="30S ribosomal protein S4"/>
    <property type="match status" value="1"/>
</dbReference>
<dbReference type="Gene3D" id="1.10.1050.10">
    <property type="entry name" value="Ribosomal Protein S4 Delta 41, Chain A, domain 1"/>
    <property type="match status" value="1"/>
</dbReference>
<dbReference type="Gene3D" id="3.10.290.10">
    <property type="entry name" value="RNA-binding S4 domain"/>
    <property type="match status" value="1"/>
</dbReference>
<dbReference type="HAMAP" id="MF_01306_B">
    <property type="entry name" value="Ribosomal_uS4_B"/>
    <property type="match status" value="1"/>
</dbReference>
<dbReference type="InterPro" id="IPR022801">
    <property type="entry name" value="Ribosomal_uS4"/>
</dbReference>
<dbReference type="InterPro" id="IPR005709">
    <property type="entry name" value="Ribosomal_uS4_bac-type"/>
</dbReference>
<dbReference type="InterPro" id="IPR001912">
    <property type="entry name" value="Ribosomal_uS4_N"/>
</dbReference>
<dbReference type="InterPro" id="IPR002942">
    <property type="entry name" value="S4_RNA-bd"/>
</dbReference>
<dbReference type="InterPro" id="IPR036986">
    <property type="entry name" value="S4_RNA-bd_sf"/>
</dbReference>
<dbReference type="NCBIfam" id="NF003717">
    <property type="entry name" value="PRK05327.1"/>
    <property type="match status" value="1"/>
</dbReference>
<dbReference type="NCBIfam" id="TIGR01017">
    <property type="entry name" value="rpsD_bact"/>
    <property type="match status" value="1"/>
</dbReference>
<dbReference type="PANTHER" id="PTHR11831">
    <property type="entry name" value="30S 40S RIBOSOMAL PROTEIN"/>
    <property type="match status" value="1"/>
</dbReference>
<dbReference type="PANTHER" id="PTHR11831:SF4">
    <property type="entry name" value="SMALL RIBOSOMAL SUBUNIT PROTEIN US4M"/>
    <property type="match status" value="1"/>
</dbReference>
<dbReference type="Pfam" id="PF00163">
    <property type="entry name" value="Ribosomal_S4"/>
    <property type="match status" value="1"/>
</dbReference>
<dbReference type="Pfam" id="PF01479">
    <property type="entry name" value="S4"/>
    <property type="match status" value="1"/>
</dbReference>
<dbReference type="SMART" id="SM01390">
    <property type="entry name" value="Ribosomal_S4"/>
    <property type="match status" value="1"/>
</dbReference>
<dbReference type="SMART" id="SM00363">
    <property type="entry name" value="S4"/>
    <property type="match status" value="1"/>
</dbReference>
<dbReference type="SUPFAM" id="SSF55174">
    <property type="entry name" value="Alpha-L RNA-binding motif"/>
    <property type="match status" value="1"/>
</dbReference>
<dbReference type="PROSITE" id="PS50889">
    <property type="entry name" value="S4"/>
    <property type="match status" value="1"/>
</dbReference>
<organism>
    <name type="scientific">Chlamydia felis (strain Fe/C-56)</name>
    <name type="common">Chlamydophila felis</name>
    <dbReference type="NCBI Taxonomy" id="264202"/>
    <lineage>
        <taxon>Bacteria</taxon>
        <taxon>Pseudomonadati</taxon>
        <taxon>Chlamydiota</taxon>
        <taxon>Chlamydiia</taxon>
        <taxon>Chlamydiales</taxon>
        <taxon>Chlamydiaceae</taxon>
        <taxon>Chlamydia/Chlamydophila group</taxon>
        <taxon>Chlamydia</taxon>
    </lineage>
</organism>
<feature type="chain" id="PRO_0000293257" description="Small ribosomal subunit protein uS4">
    <location>
        <begin position="1"/>
        <end position="209"/>
    </location>
</feature>
<feature type="domain" description="S4 RNA-binding" evidence="1">
    <location>
        <begin position="93"/>
        <end position="156"/>
    </location>
</feature>
<feature type="region of interest" description="Disordered" evidence="2">
    <location>
        <begin position="23"/>
        <end position="46"/>
    </location>
</feature>
<sequence length="209" mass="24012">MARYCGPKNRIARRFGANIFGRSRNPLLKKPHPPGQHGMQRKKKSDYGLQLEEKQKLKACYGMILEKQLVKAFKEVVHKQGSVTKMFLERFECRLDNMVYRMGFAKTIFAAQQLVAHGHVLVNGKKVDRRSFFLRPGMQVSLKEKSRKLQSVQESLENKDESSLPSYISLDKGNFKGELLMSPEQDQMEAQLPLPVDISVVCEFLSHRT</sequence>